<sequence length="136" mass="15171">MTPVPPSSLRSIAPLSTVFLFTDNVRSNSWFVCKIVYRCLSPRRIISPSICTAFSCWANHGLRLSSTAAMRRSSSSTFLFMASTRMSSSTFVCFIFVFCVSRTAMVFWSFSESTSLLWCIISSSMRLCFSITSGST</sequence>
<organismHost>
    <name type="scientific">Ictaluridae</name>
    <name type="common">bullhead catfishes</name>
    <dbReference type="NCBI Taxonomy" id="7996"/>
</organismHost>
<feature type="chain" id="PRO_0000222122" description="Uncharacterized protein ORF40">
    <location>
        <begin position="1"/>
        <end position="136"/>
    </location>
</feature>
<gene>
    <name type="primary">ORF40</name>
</gene>
<protein>
    <recommendedName>
        <fullName>Uncharacterized protein ORF40</fullName>
    </recommendedName>
</protein>
<organism>
    <name type="scientific">Ictalurid herpesvirus 1 (strain Auburn)</name>
    <name type="common">IcHV-1</name>
    <name type="synonym">Channel catfish herpesvirus</name>
    <dbReference type="NCBI Taxonomy" id="766178"/>
    <lineage>
        <taxon>Viruses</taxon>
        <taxon>Duplodnaviria</taxon>
        <taxon>Heunggongvirae</taxon>
        <taxon>Peploviricota</taxon>
        <taxon>Herviviricetes</taxon>
        <taxon>Herpesvirales</taxon>
        <taxon>Alloherpesviridae</taxon>
        <taxon>Ictavirus</taxon>
        <taxon>Ictavirus ictaluridallo1</taxon>
        <taxon>Ictalurid herpesvirus 1</taxon>
    </lineage>
</organism>
<reference key="1">
    <citation type="journal article" date="1992" name="Virology">
        <title>Channel catfish virus: a new type of herpesvirus.</title>
        <authorList>
            <person name="Davison A.J."/>
        </authorList>
    </citation>
    <scope>NUCLEOTIDE SEQUENCE [LARGE SCALE GENOMIC DNA]</scope>
</reference>
<dbReference type="EMBL" id="M75136">
    <property type="protein sequence ID" value="AAA88143.1"/>
    <property type="molecule type" value="Genomic_DNA"/>
</dbReference>
<dbReference type="PIR" id="E36790">
    <property type="entry name" value="E36790"/>
</dbReference>
<dbReference type="RefSeq" id="NP_041131.1">
    <property type="nucleotide sequence ID" value="NC_001493.2"/>
</dbReference>
<dbReference type="GeneID" id="1488391"/>
<dbReference type="KEGG" id="vg:1488391"/>
<dbReference type="Proteomes" id="UP000007643">
    <property type="component" value="Segment"/>
</dbReference>
<name>VG40_ICHVA</name>
<accession>Q00145</accession>
<keyword id="KW-1185">Reference proteome</keyword>
<proteinExistence type="predicted"/>